<evidence type="ECO:0000250" key="1"/>
<evidence type="ECO:0000255" key="2"/>
<evidence type="ECO:0000256" key="3">
    <source>
        <dbReference type="SAM" id="MobiDB-lite"/>
    </source>
</evidence>
<evidence type="ECO:0000305" key="4"/>
<name>PMTB_ARATH</name>
<organism>
    <name type="scientific">Arabidopsis thaliana</name>
    <name type="common">Mouse-ear cress</name>
    <dbReference type="NCBI Taxonomy" id="3702"/>
    <lineage>
        <taxon>Eukaryota</taxon>
        <taxon>Viridiplantae</taxon>
        <taxon>Streptophyta</taxon>
        <taxon>Embryophyta</taxon>
        <taxon>Tracheophyta</taxon>
        <taxon>Spermatophyta</taxon>
        <taxon>Magnoliopsida</taxon>
        <taxon>eudicotyledons</taxon>
        <taxon>Gunneridae</taxon>
        <taxon>Pentapetalae</taxon>
        <taxon>rosids</taxon>
        <taxon>malvids</taxon>
        <taxon>Brassicales</taxon>
        <taxon>Brassicaceae</taxon>
        <taxon>Camelineae</taxon>
        <taxon>Arabidopsis</taxon>
    </lineage>
</organism>
<gene>
    <name type="ordered locus">At2g39750</name>
    <name type="ORF">T5I7.5</name>
</gene>
<accession>O22285</accession>
<dbReference type="EC" id="2.1.1.-"/>
<dbReference type="EMBL" id="AC003000">
    <property type="protein sequence ID" value="AAB87124.1"/>
    <property type="molecule type" value="Genomic_DNA"/>
</dbReference>
<dbReference type="EMBL" id="CP002685">
    <property type="protein sequence ID" value="AEC09718.1"/>
    <property type="molecule type" value="Genomic_DNA"/>
</dbReference>
<dbReference type="EMBL" id="AY053416">
    <property type="protein sequence ID" value="AAK96646.1"/>
    <property type="molecule type" value="mRNA"/>
</dbReference>
<dbReference type="EMBL" id="AY124857">
    <property type="protein sequence ID" value="AAM70566.1"/>
    <property type="molecule type" value="mRNA"/>
</dbReference>
<dbReference type="PIR" id="T01005">
    <property type="entry name" value="T01005"/>
</dbReference>
<dbReference type="RefSeq" id="NP_030521.1">
    <property type="nucleotide sequence ID" value="NM_129533.4"/>
</dbReference>
<dbReference type="BioGRID" id="3898">
    <property type="interactions" value="2"/>
</dbReference>
<dbReference type="FunCoup" id="O22285">
    <property type="interactions" value="2282"/>
</dbReference>
<dbReference type="IntAct" id="O22285">
    <property type="interactions" value="2"/>
</dbReference>
<dbReference type="STRING" id="3702.O22285"/>
<dbReference type="GlyGen" id="O22285">
    <property type="glycosylation" value="5 sites"/>
</dbReference>
<dbReference type="PaxDb" id="3702-AT2G39750.1"/>
<dbReference type="ProteomicsDB" id="234746"/>
<dbReference type="EnsemblPlants" id="AT2G39750.1">
    <property type="protein sequence ID" value="AT2G39750.1"/>
    <property type="gene ID" value="AT2G39750"/>
</dbReference>
<dbReference type="GeneID" id="818560"/>
<dbReference type="Gramene" id="AT2G39750.1">
    <property type="protein sequence ID" value="AT2G39750.1"/>
    <property type="gene ID" value="AT2G39750"/>
</dbReference>
<dbReference type="KEGG" id="ath:AT2G39750"/>
<dbReference type="Araport" id="AT2G39750"/>
<dbReference type="TAIR" id="AT2G39750"/>
<dbReference type="eggNOG" id="ENOG502QQFS">
    <property type="taxonomic scope" value="Eukaryota"/>
</dbReference>
<dbReference type="HOGENOM" id="CLU_010485_2_4_1"/>
<dbReference type="InParanoid" id="O22285"/>
<dbReference type="OMA" id="DQQIDCW"/>
<dbReference type="PhylomeDB" id="O22285"/>
<dbReference type="PRO" id="PR:O22285"/>
<dbReference type="Proteomes" id="UP000006548">
    <property type="component" value="Chromosome 2"/>
</dbReference>
<dbReference type="ExpressionAtlas" id="O22285">
    <property type="expression patterns" value="baseline and differential"/>
</dbReference>
<dbReference type="GO" id="GO:0005768">
    <property type="term" value="C:endosome"/>
    <property type="evidence" value="ECO:0007005"/>
    <property type="project" value="TAIR"/>
</dbReference>
<dbReference type="GO" id="GO:0005794">
    <property type="term" value="C:Golgi apparatus"/>
    <property type="evidence" value="ECO:0007005"/>
    <property type="project" value="TAIR"/>
</dbReference>
<dbReference type="GO" id="GO:0000139">
    <property type="term" value="C:Golgi membrane"/>
    <property type="evidence" value="ECO:0007669"/>
    <property type="project" value="UniProtKB-SubCell"/>
</dbReference>
<dbReference type="GO" id="GO:0005802">
    <property type="term" value="C:trans-Golgi network"/>
    <property type="evidence" value="ECO:0007005"/>
    <property type="project" value="TAIR"/>
</dbReference>
<dbReference type="GO" id="GO:0008168">
    <property type="term" value="F:methyltransferase activity"/>
    <property type="evidence" value="ECO:0007669"/>
    <property type="project" value="UniProtKB-KW"/>
</dbReference>
<dbReference type="GO" id="GO:0032259">
    <property type="term" value="P:methylation"/>
    <property type="evidence" value="ECO:0007669"/>
    <property type="project" value="UniProtKB-KW"/>
</dbReference>
<dbReference type="FunFam" id="3.40.50.150:FF:000418">
    <property type="entry name" value="Probable methyltransferase PMT11"/>
    <property type="match status" value="1"/>
</dbReference>
<dbReference type="Gene3D" id="3.40.50.150">
    <property type="entry name" value="Vaccinia Virus protein VP39"/>
    <property type="match status" value="1"/>
</dbReference>
<dbReference type="InterPro" id="IPR004159">
    <property type="entry name" value="Put_SAM_MeTrfase"/>
</dbReference>
<dbReference type="InterPro" id="IPR029063">
    <property type="entry name" value="SAM-dependent_MTases_sf"/>
</dbReference>
<dbReference type="PANTHER" id="PTHR10108:SF979">
    <property type="entry name" value="METHYLTRANSFERASE PMT11-RELATED"/>
    <property type="match status" value="1"/>
</dbReference>
<dbReference type="PANTHER" id="PTHR10108">
    <property type="entry name" value="SAM-DEPENDENT METHYLTRANSFERASE"/>
    <property type="match status" value="1"/>
</dbReference>
<dbReference type="Pfam" id="PF03141">
    <property type="entry name" value="Methyltransf_29"/>
    <property type="match status" value="1"/>
</dbReference>
<dbReference type="SUPFAM" id="SSF53335">
    <property type="entry name" value="S-adenosyl-L-methionine-dependent methyltransferases"/>
    <property type="match status" value="2"/>
</dbReference>
<reference key="1">
    <citation type="journal article" date="1999" name="Nature">
        <title>Sequence and analysis of chromosome 2 of the plant Arabidopsis thaliana.</title>
        <authorList>
            <person name="Lin X."/>
            <person name="Kaul S."/>
            <person name="Rounsley S.D."/>
            <person name="Shea T.P."/>
            <person name="Benito M.-I."/>
            <person name="Town C.D."/>
            <person name="Fujii C.Y."/>
            <person name="Mason T.M."/>
            <person name="Bowman C.L."/>
            <person name="Barnstead M.E."/>
            <person name="Feldblyum T.V."/>
            <person name="Buell C.R."/>
            <person name="Ketchum K.A."/>
            <person name="Lee J.J."/>
            <person name="Ronning C.M."/>
            <person name="Koo H.L."/>
            <person name="Moffat K.S."/>
            <person name="Cronin L.A."/>
            <person name="Shen M."/>
            <person name="Pai G."/>
            <person name="Van Aken S."/>
            <person name="Umayam L."/>
            <person name="Tallon L.J."/>
            <person name="Gill J.E."/>
            <person name="Adams M.D."/>
            <person name="Carrera A.J."/>
            <person name="Creasy T.H."/>
            <person name="Goodman H.M."/>
            <person name="Somerville C.R."/>
            <person name="Copenhaver G.P."/>
            <person name="Preuss D."/>
            <person name="Nierman W.C."/>
            <person name="White O."/>
            <person name="Eisen J.A."/>
            <person name="Salzberg S.L."/>
            <person name="Fraser C.M."/>
            <person name="Venter J.C."/>
        </authorList>
    </citation>
    <scope>NUCLEOTIDE SEQUENCE [LARGE SCALE GENOMIC DNA]</scope>
    <source>
        <strain>cv. Columbia</strain>
    </source>
</reference>
<reference key="2">
    <citation type="journal article" date="2017" name="Plant J.">
        <title>Araport11: a complete reannotation of the Arabidopsis thaliana reference genome.</title>
        <authorList>
            <person name="Cheng C.Y."/>
            <person name="Krishnakumar V."/>
            <person name="Chan A.P."/>
            <person name="Thibaud-Nissen F."/>
            <person name="Schobel S."/>
            <person name="Town C.D."/>
        </authorList>
    </citation>
    <scope>GENOME REANNOTATION</scope>
    <source>
        <strain>cv. Columbia</strain>
    </source>
</reference>
<reference key="3">
    <citation type="journal article" date="2003" name="Science">
        <title>Empirical analysis of transcriptional activity in the Arabidopsis genome.</title>
        <authorList>
            <person name="Yamada K."/>
            <person name="Lim J."/>
            <person name="Dale J.M."/>
            <person name="Chen H."/>
            <person name="Shinn P."/>
            <person name="Palm C.J."/>
            <person name="Southwick A.M."/>
            <person name="Wu H.C."/>
            <person name="Kim C.J."/>
            <person name="Nguyen M."/>
            <person name="Pham P.K."/>
            <person name="Cheuk R.F."/>
            <person name="Karlin-Newmann G."/>
            <person name="Liu S.X."/>
            <person name="Lam B."/>
            <person name="Sakano H."/>
            <person name="Wu T."/>
            <person name="Yu G."/>
            <person name="Miranda M."/>
            <person name="Quach H.L."/>
            <person name="Tripp M."/>
            <person name="Chang C.H."/>
            <person name="Lee J.M."/>
            <person name="Toriumi M.J."/>
            <person name="Chan M.M."/>
            <person name="Tang C.C."/>
            <person name="Onodera C.S."/>
            <person name="Deng J.M."/>
            <person name="Akiyama K."/>
            <person name="Ansari Y."/>
            <person name="Arakawa T."/>
            <person name="Banh J."/>
            <person name="Banno F."/>
            <person name="Bowser L."/>
            <person name="Brooks S.Y."/>
            <person name="Carninci P."/>
            <person name="Chao Q."/>
            <person name="Choy N."/>
            <person name="Enju A."/>
            <person name="Goldsmith A.D."/>
            <person name="Gurjal M."/>
            <person name="Hansen N.F."/>
            <person name="Hayashizaki Y."/>
            <person name="Johnson-Hopson C."/>
            <person name="Hsuan V.W."/>
            <person name="Iida K."/>
            <person name="Karnes M."/>
            <person name="Khan S."/>
            <person name="Koesema E."/>
            <person name="Ishida J."/>
            <person name="Jiang P.X."/>
            <person name="Jones T."/>
            <person name="Kawai J."/>
            <person name="Kamiya A."/>
            <person name="Meyers C."/>
            <person name="Nakajima M."/>
            <person name="Narusaka M."/>
            <person name="Seki M."/>
            <person name="Sakurai T."/>
            <person name="Satou M."/>
            <person name="Tamse R."/>
            <person name="Vaysberg M."/>
            <person name="Wallender E.K."/>
            <person name="Wong C."/>
            <person name="Yamamura Y."/>
            <person name="Yuan S."/>
            <person name="Shinozaki K."/>
            <person name="Davis R.W."/>
            <person name="Theologis A."/>
            <person name="Ecker J.R."/>
        </authorList>
    </citation>
    <scope>NUCLEOTIDE SEQUENCE [LARGE SCALE MRNA]</scope>
    <source>
        <strain>cv. Columbia</strain>
    </source>
</reference>
<reference key="4">
    <citation type="journal article" date="2007" name="Plant J.">
        <title>The TUMOROUS SHOOT DEVELOPMENT2 gene of Arabidopsis encoding a putative methyltransferase is required for cell adhesion and co-ordinated plant development.</title>
        <authorList>
            <person name="Krupkova E."/>
            <person name="Immerzeel P."/>
            <person name="Pauly M."/>
            <person name="Schmulling T."/>
        </authorList>
    </citation>
    <scope>GENE FAMILY</scope>
</reference>
<sequence length="694" mass="78369">MKPLTNGDLFKSPTLIKISALVFVTVAFFYLGKHWSDDGYQQLVFFSSSTSGSSIPEVSVSPNSNRVFNLSAIIPTNHTQIEIPATIRQQPPSVVADTEKVKVEANPPPPPPPSPSPPPPPGPVKSFGIVDANGVMSDDFEVGEVESDTVEDWGNQTEIVEAKSDGDSKARVRIKKFGMCPESMREYIPCLDNTDVIKKLKSTERGERFERHCPEKGKGLNCLVPPPKGYRQPIPWPKSRDEVWFSNVPHTRLVEDKGGQNWISRDKNKFKFPGGGTQFIHGADQYLDQMSKMVSDITFGKHIRVAMDVGCGVASFGAYLLSRDVMTMSVAPKDVHENQIQFALERGVPAMAAAFATRRLLYPSQAFDLIHCSRCRINWTRDDGILLLEINRMLRAGGYFAWAAQPVYKHEPALEEQWTEMLNLTISLCWKLVKKEGYVAIWQKPFNNDCYLSREAGTKPPLCDESDDPDNVWYTNLKPCISRIPEKGYGGNVPLWPARLHTPPDRLQTIKFDSYIARKELFKAESKYWNEIIGGYVRALKWKKMKLRNVLDMRAGFGGFAAALNDHKLDCWVLSVVPVSGPNTLPVIYDRGLLGVMHDWCEPFDTYPRTYDFLHASGLFSIERKRCEMSTILLEMDRILRPGGRAYIRDSIDVMDEIQEITKAMGWHTSLRDTSEGPHASYRILTCEKRLLRA</sequence>
<protein>
    <recommendedName>
        <fullName>Probable methyltransferase PMT11</fullName>
        <ecNumber>2.1.1.-</ecNumber>
    </recommendedName>
</protein>
<keyword id="KW-0325">Glycoprotein</keyword>
<keyword id="KW-0333">Golgi apparatus</keyword>
<keyword id="KW-0472">Membrane</keyword>
<keyword id="KW-0489">Methyltransferase</keyword>
<keyword id="KW-1185">Reference proteome</keyword>
<keyword id="KW-0735">Signal-anchor</keyword>
<keyword id="KW-0808">Transferase</keyword>
<keyword id="KW-0812">Transmembrane</keyword>
<keyword id="KW-1133">Transmembrane helix</keyword>
<proteinExistence type="evidence at transcript level"/>
<feature type="chain" id="PRO_0000393251" description="Probable methyltransferase PMT11">
    <location>
        <begin position="1"/>
        <end position="694"/>
    </location>
</feature>
<feature type="topological domain" description="Cytoplasmic" evidence="2">
    <location>
        <begin position="1"/>
        <end position="14"/>
    </location>
</feature>
<feature type="transmembrane region" description="Helical; Signal-anchor for type II membrane protein" evidence="2">
    <location>
        <begin position="15"/>
        <end position="32"/>
    </location>
</feature>
<feature type="topological domain" description="Lumenal" evidence="2">
    <location>
        <begin position="33"/>
        <end position="694"/>
    </location>
</feature>
<feature type="region of interest" description="Disordered" evidence="3">
    <location>
        <begin position="83"/>
        <end position="128"/>
    </location>
</feature>
<feature type="compositionally biased region" description="Pro residues" evidence="3">
    <location>
        <begin position="106"/>
        <end position="123"/>
    </location>
</feature>
<feature type="glycosylation site" description="N-linked (GlcNAc...) asparagine" evidence="2">
    <location>
        <position position="69"/>
    </location>
</feature>
<feature type="glycosylation site" description="N-linked (GlcNAc...) asparagine" evidence="2">
    <location>
        <position position="77"/>
    </location>
</feature>
<feature type="glycosylation site" description="N-linked (GlcNAc...) asparagine" evidence="2">
    <location>
        <position position="155"/>
    </location>
</feature>
<feature type="glycosylation site" description="N-linked (GlcNAc...) asparagine" evidence="2">
    <location>
        <position position="378"/>
    </location>
</feature>
<feature type="glycosylation site" description="N-linked (GlcNAc...) asparagine" evidence="2">
    <location>
        <position position="423"/>
    </location>
</feature>
<comment type="subcellular location">
    <subcellularLocation>
        <location evidence="1">Golgi apparatus membrane</location>
        <topology>Single-pass type II membrane protein</topology>
    </subcellularLocation>
</comment>
<comment type="similarity">
    <text evidence="4">Belongs to the methyltransferase superfamily.</text>
</comment>